<feature type="chain" id="PRO_0000444445" description="Probable dTDP-4,6-dihydroxy-2-methyloxan-3-one 4-ketoreductase">
    <location>
        <begin position="1"/>
        <end position="295"/>
    </location>
</feature>
<feature type="active site" description="Proton donor/acceptor" evidence="1">
    <location>
        <position position="126"/>
    </location>
</feature>
<feature type="binding site" evidence="1">
    <location>
        <begin position="10"/>
        <end position="12"/>
    </location>
    <ligand>
        <name>NADH</name>
        <dbReference type="ChEBI" id="CHEBI:57945"/>
    </ligand>
</feature>
<feature type="binding site" evidence="1">
    <location>
        <begin position="11"/>
        <end position="12"/>
    </location>
    <ligand>
        <name>NADPH</name>
        <dbReference type="ChEBI" id="CHEBI:57783"/>
    </ligand>
</feature>
<feature type="binding site" evidence="1">
    <location>
        <begin position="36"/>
        <end position="37"/>
    </location>
    <ligand>
        <name>NADH</name>
        <dbReference type="ChEBI" id="CHEBI:57945"/>
    </ligand>
</feature>
<feature type="binding site" evidence="1">
    <location>
        <begin position="36"/>
        <end position="37"/>
    </location>
    <ligand>
        <name>NADPH</name>
        <dbReference type="ChEBI" id="CHEBI:57783"/>
    </ligand>
</feature>
<feature type="binding site" evidence="1">
    <location>
        <begin position="60"/>
        <end position="62"/>
    </location>
    <ligand>
        <name>NADH</name>
        <dbReference type="ChEBI" id="CHEBI:57945"/>
    </ligand>
</feature>
<feature type="binding site" evidence="1">
    <location>
        <begin position="60"/>
        <end position="62"/>
    </location>
    <ligand>
        <name>NADPH</name>
        <dbReference type="ChEBI" id="CHEBI:57783"/>
    </ligand>
</feature>
<feature type="binding site" evidence="1">
    <location>
        <position position="126"/>
    </location>
    <ligand>
        <name>NADH</name>
        <dbReference type="ChEBI" id="CHEBI:57945"/>
    </ligand>
</feature>
<feature type="binding site" evidence="1">
    <location>
        <position position="126"/>
    </location>
    <ligand>
        <name>NADPH</name>
        <dbReference type="ChEBI" id="CHEBI:57783"/>
    </ligand>
</feature>
<feature type="binding site" evidence="1">
    <location>
        <position position="130"/>
    </location>
    <ligand>
        <name>NADH</name>
        <dbReference type="ChEBI" id="CHEBI:57945"/>
    </ligand>
</feature>
<feature type="binding site" evidence="1">
    <location>
        <position position="130"/>
    </location>
    <ligand>
        <name>NADPH</name>
        <dbReference type="ChEBI" id="CHEBI:57783"/>
    </ligand>
</feature>
<feature type="site" description="Could provide a fine-tuning to achieve optimal pKa matching between active site and substrate" evidence="1">
    <location>
        <position position="102"/>
    </location>
</feature>
<evidence type="ECO:0000250" key="1">
    <source>
        <dbReference type="UniProtKB" id="P26392"/>
    </source>
</evidence>
<evidence type="ECO:0000269" key="2">
    <source>
    </source>
</evidence>
<evidence type="ECO:0000303" key="3">
    <source>
    </source>
</evidence>
<evidence type="ECO:0000305" key="4"/>
<evidence type="ECO:0000305" key="5">
    <source>
    </source>
</evidence>
<evidence type="ECO:0000312" key="6">
    <source>
        <dbReference type="EMBL" id="AAD55455.1"/>
    </source>
</evidence>
<protein>
    <recommendedName>
        <fullName evidence="5">Probable dTDP-4,6-dihydroxy-2-methyloxan-3-one 4-ketoreductase</fullName>
        <ecNumber evidence="4">1.1.1.-</ecNumber>
    </recommendedName>
</protein>
<gene>
    <name evidence="3" type="primary">oleU</name>
</gene>
<reference key="1">
    <citation type="journal article" date="2000" name="Antimicrob. Agents Chemother.">
        <title>Identification and expression of genes involved in biosynthesis of L-oleandrose and its intermediate L-olivose in the oleandomycin producer Streptomyces antibioticus.</title>
        <authorList>
            <person name="Aguirrezabalaga I."/>
            <person name="Olano C."/>
            <person name="Allende N."/>
            <person name="Rodriguez L."/>
            <person name="Brana A.F."/>
            <person name="Mendez C."/>
            <person name="Salas J.A."/>
        </authorList>
    </citation>
    <scope>NUCLEOTIDE SEQUENCE [GENOMIC DNA]</scope>
    <scope>FUNCTION</scope>
    <scope>PATHWAY</scope>
    <source>
        <strain evidence="6">ATCC 11891 / DSM 40868 / BCRC 11580 / NCIMB 11506 / PSA 205</strain>
    </source>
</reference>
<comment type="function">
    <text evidence="2">Involved in the biosynthesis of one of the two 2,6-deoxysugars, dTDP-L-oleandrose, attached to the macrolactone ring oleandolide to produce the aglycone antibiotic oleandomycin (PubMed:10770761). Probably catalyzes the reduction of dTDP-4-keto-2,6-dideoxy-beta-L-galactose to yield dTDP-L-olivose.</text>
</comment>
<comment type="cofactor">
    <cofactor evidence="1">
        <name>Mg(2+)</name>
        <dbReference type="ChEBI" id="CHEBI:18420"/>
    </cofactor>
    <text evidence="1">Binds 1 Mg(2+) ion per monomer.</text>
</comment>
<comment type="pathway">
    <text evidence="5">Antibiotic biosynthesis.</text>
</comment>
<comment type="similarity">
    <text evidence="4">Belongs to the dTDP-4-dehydrorhamnose reductase family.</text>
</comment>
<keyword id="KW-0045">Antibiotic biosynthesis</keyword>
<keyword id="KW-0460">Magnesium</keyword>
<keyword id="KW-0479">Metal-binding</keyword>
<keyword id="KW-0520">NAD</keyword>
<keyword id="KW-0521">NADP</keyword>
<keyword id="KW-0560">Oxidoreductase</keyword>
<proteinExistence type="inferred from homology"/>
<organism>
    <name type="scientific">Streptomyces antibioticus</name>
    <dbReference type="NCBI Taxonomy" id="1890"/>
    <lineage>
        <taxon>Bacteria</taxon>
        <taxon>Bacillati</taxon>
        <taxon>Actinomycetota</taxon>
        <taxon>Actinomycetes</taxon>
        <taxon>Kitasatosporales</taxon>
        <taxon>Streptomycetaceae</taxon>
        <taxon>Streptomyces</taxon>
    </lineage>
</organism>
<name>OLEU_STRAT</name>
<sequence length="295" mass="32099">MRWLITGAAGMLGRELVRRLAENEEDVAALGHDHLDVTRPSAVRAALAEHRPGIVVNCAAYTAVDDAETDEAAAALLNAEAPRLLAEGLRPHRRHGLVHLSTDYVFPGDARTPYAEDHPTAPRSAYGRTKRDGEQAVLTALPTATVLRTAWLYGRTGRSFVRTMIEREARGGAIDVVADQRGQPTWTGDLADRIIAVGRHPGVHGILHATNAGSATWYDLAQEVFRLLDADPGRVRPTTGAAFRRPAPRPAYSVLGHDRWRGTGLAPLRDWRSALREAFPDILAAEHPPTRRGAA</sequence>
<accession>Q9RR27</accession>
<dbReference type="EC" id="1.1.1.-" evidence="4"/>
<dbReference type="EMBL" id="AF055579">
    <property type="protein sequence ID" value="AAD55455.1"/>
    <property type="molecule type" value="Genomic_DNA"/>
</dbReference>
<dbReference type="PIR" id="T51107">
    <property type="entry name" value="T51107"/>
</dbReference>
<dbReference type="SMR" id="Q9RR27"/>
<dbReference type="KEGG" id="ag:AAD55455"/>
<dbReference type="BioCyc" id="MetaCyc:MONOMER-17067"/>
<dbReference type="GO" id="GO:0005829">
    <property type="term" value="C:cytosol"/>
    <property type="evidence" value="ECO:0007669"/>
    <property type="project" value="TreeGrafter"/>
</dbReference>
<dbReference type="GO" id="GO:0008831">
    <property type="term" value="F:dTDP-4-dehydrorhamnose reductase activity"/>
    <property type="evidence" value="ECO:0007669"/>
    <property type="project" value="TreeGrafter"/>
</dbReference>
<dbReference type="GO" id="GO:0046872">
    <property type="term" value="F:metal ion binding"/>
    <property type="evidence" value="ECO:0007669"/>
    <property type="project" value="UniProtKB-KW"/>
</dbReference>
<dbReference type="GO" id="GO:0017000">
    <property type="term" value="P:antibiotic biosynthetic process"/>
    <property type="evidence" value="ECO:0007669"/>
    <property type="project" value="UniProtKB-KW"/>
</dbReference>
<dbReference type="GO" id="GO:0019305">
    <property type="term" value="P:dTDP-rhamnose biosynthetic process"/>
    <property type="evidence" value="ECO:0007669"/>
    <property type="project" value="TreeGrafter"/>
</dbReference>
<dbReference type="CDD" id="cd05254">
    <property type="entry name" value="dTDP_HR_like_SDR_e"/>
    <property type="match status" value="1"/>
</dbReference>
<dbReference type="Gene3D" id="3.40.50.720">
    <property type="entry name" value="NAD(P)-binding Rossmann-like Domain"/>
    <property type="match status" value="1"/>
</dbReference>
<dbReference type="Gene3D" id="3.90.25.10">
    <property type="entry name" value="UDP-galactose 4-epimerase, domain 1"/>
    <property type="match status" value="1"/>
</dbReference>
<dbReference type="InterPro" id="IPR005913">
    <property type="entry name" value="dTDP_dehydrorham_reduct"/>
</dbReference>
<dbReference type="InterPro" id="IPR036291">
    <property type="entry name" value="NAD(P)-bd_dom_sf"/>
</dbReference>
<dbReference type="InterPro" id="IPR029903">
    <property type="entry name" value="RmlD-like-bd"/>
</dbReference>
<dbReference type="NCBIfam" id="TIGR01214">
    <property type="entry name" value="rmlD"/>
    <property type="match status" value="1"/>
</dbReference>
<dbReference type="PANTHER" id="PTHR10491">
    <property type="entry name" value="DTDP-4-DEHYDRORHAMNOSE REDUCTASE"/>
    <property type="match status" value="1"/>
</dbReference>
<dbReference type="PANTHER" id="PTHR10491:SF4">
    <property type="entry name" value="METHIONINE ADENOSYLTRANSFERASE 2 SUBUNIT BETA"/>
    <property type="match status" value="1"/>
</dbReference>
<dbReference type="Pfam" id="PF04321">
    <property type="entry name" value="RmlD_sub_bind"/>
    <property type="match status" value="1"/>
</dbReference>
<dbReference type="SUPFAM" id="SSF51735">
    <property type="entry name" value="NAD(P)-binding Rossmann-fold domains"/>
    <property type="match status" value="1"/>
</dbReference>